<proteinExistence type="inferred from homology"/>
<reference key="1">
    <citation type="journal article" date="2009" name="BMC Genomics">
        <title>Metabolic analysis of the soil microbe Dechloromonas aromatica str. RCB: indications of a surprisingly complex life-style and cryptic anaerobic pathways for aromatic degradation.</title>
        <authorList>
            <person name="Salinero K.K."/>
            <person name="Keller K."/>
            <person name="Feil W.S."/>
            <person name="Feil H."/>
            <person name="Trong S."/>
            <person name="Di Bartolo G."/>
            <person name="Lapidus A."/>
        </authorList>
    </citation>
    <scope>NUCLEOTIDE SEQUENCE [LARGE SCALE GENOMIC DNA]</scope>
    <source>
        <strain>RCB</strain>
    </source>
</reference>
<keyword id="KW-0131">Cell cycle</keyword>
<keyword id="KW-0132">Cell division</keyword>
<accession>Q47JE5</accession>
<sequence length="85" mass="9475">MSLLSMLFGNKPKTAHLAKERLQLIIAHERDGGGSSANFLPDLQRELIAVISKYVKVNTEDIRVSLEKQGNYEVLEVNIVLPEKG</sequence>
<protein>
    <recommendedName>
        <fullName evidence="1">Cell division topological specificity factor</fullName>
    </recommendedName>
</protein>
<comment type="function">
    <text evidence="1">Prevents the cell division inhibition by proteins MinC and MinD at internal division sites while permitting inhibition at polar sites. This ensures cell division at the proper site by restricting the formation of a division septum at the midpoint of the long axis of the cell.</text>
</comment>
<comment type="similarity">
    <text evidence="1">Belongs to the MinE family.</text>
</comment>
<organism>
    <name type="scientific">Dechloromonas aromatica (strain RCB)</name>
    <dbReference type="NCBI Taxonomy" id="159087"/>
    <lineage>
        <taxon>Bacteria</taxon>
        <taxon>Pseudomonadati</taxon>
        <taxon>Pseudomonadota</taxon>
        <taxon>Betaproteobacteria</taxon>
        <taxon>Rhodocyclales</taxon>
        <taxon>Azonexaceae</taxon>
        <taxon>Dechloromonas</taxon>
    </lineage>
</organism>
<evidence type="ECO:0000255" key="1">
    <source>
        <dbReference type="HAMAP-Rule" id="MF_00262"/>
    </source>
</evidence>
<name>MINE_DECAR</name>
<feature type="chain" id="PRO_0000298106" description="Cell division topological specificity factor">
    <location>
        <begin position="1"/>
        <end position="85"/>
    </location>
</feature>
<gene>
    <name evidence="1" type="primary">minE</name>
    <name type="ordered locus">Daro_0277</name>
</gene>
<dbReference type="EMBL" id="CP000089">
    <property type="protein sequence ID" value="AAZ45036.1"/>
    <property type="molecule type" value="Genomic_DNA"/>
</dbReference>
<dbReference type="SMR" id="Q47JE5"/>
<dbReference type="STRING" id="159087.Daro_0277"/>
<dbReference type="KEGG" id="dar:Daro_0277"/>
<dbReference type="eggNOG" id="COG0851">
    <property type="taxonomic scope" value="Bacteria"/>
</dbReference>
<dbReference type="HOGENOM" id="CLU_137929_2_1_4"/>
<dbReference type="OrthoDB" id="9802655at2"/>
<dbReference type="GO" id="GO:0051301">
    <property type="term" value="P:cell division"/>
    <property type="evidence" value="ECO:0007669"/>
    <property type="project" value="UniProtKB-KW"/>
</dbReference>
<dbReference type="GO" id="GO:0032955">
    <property type="term" value="P:regulation of division septum assembly"/>
    <property type="evidence" value="ECO:0007669"/>
    <property type="project" value="InterPro"/>
</dbReference>
<dbReference type="FunFam" id="3.30.1070.10:FF:000001">
    <property type="entry name" value="Cell division topological specificity factor"/>
    <property type="match status" value="1"/>
</dbReference>
<dbReference type="Gene3D" id="3.30.1070.10">
    <property type="entry name" value="Cell division topological specificity factor MinE"/>
    <property type="match status" value="1"/>
</dbReference>
<dbReference type="HAMAP" id="MF_00262">
    <property type="entry name" value="MinE"/>
    <property type="match status" value="1"/>
</dbReference>
<dbReference type="InterPro" id="IPR005527">
    <property type="entry name" value="MinE"/>
</dbReference>
<dbReference type="InterPro" id="IPR036707">
    <property type="entry name" value="MinE_sf"/>
</dbReference>
<dbReference type="NCBIfam" id="TIGR01215">
    <property type="entry name" value="minE"/>
    <property type="match status" value="1"/>
</dbReference>
<dbReference type="NCBIfam" id="NF001422">
    <property type="entry name" value="PRK00296.1"/>
    <property type="match status" value="1"/>
</dbReference>
<dbReference type="NCBIfam" id="NF010595">
    <property type="entry name" value="PRK13989.1"/>
    <property type="match status" value="1"/>
</dbReference>
<dbReference type="Pfam" id="PF03776">
    <property type="entry name" value="MinE"/>
    <property type="match status" value="1"/>
</dbReference>
<dbReference type="SUPFAM" id="SSF55229">
    <property type="entry name" value="Cell division protein MinE topological specificity domain"/>
    <property type="match status" value="1"/>
</dbReference>